<gene>
    <name evidence="1" type="primary">rpmA</name>
    <name type="ordered locus">BURPS1106A_3525</name>
</gene>
<organism>
    <name type="scientific">Burkholderia pseudomallei (strain 1106a)</name>
    <dbReference type="NCBI Taxonomy" id="357348"/>
    <lineage>
        <taxon>Bacteria</taxon>
        <taxon>Pseudomonadati</taxon>
        <taxon>Pseudomonadota</taxon>
        <taxon>Betaproteobacteria</taxon>
        <taxon>Burkholderiales</taxon>
        <taxon>Burkholderiaceae</taxon>
        <taxon>Burkholderia</taxon>
        <taxon>pseudomallei group</taxon>
    </lineage>
</organism>
<name>RL27_BURP0</name>
<feature type="chain" id="PRO_1000017432" description="Large ribosomal subunit protein bL27">
    <location>
        <begin position="1"/>
        <end position="87"/>
    </location>
</feature>
<feature type="region of interest" description="Disordered" evidence="2">
    <location>
        <begin position="1"/>
        <end position="21"/>
    </location>
</feature>
<keyword id="KW-0687">Ribonucleoprotein</keyword>
<keyword id="KW-0689">Ribosomal protein</keyword>
<accession>A3NZJ1</accession>
<proteinExistence type="inferred from homology"/>
<reference key="1">
    <citation type="journal article" date="2010" name="Genome Biol. Evol.">
        <title>Continuing evolution of Burkholderia mallei through genome reduction and large-scale rearrangements.</title>
        <authorList>
            <person name="Losada L."/>
            <person name="Ronning C.M."/>
            <person name="DeShazer D."/>
            <person name="Woods D."/>
            <person name="Fedorova N."/>
            <person name="Kim H.S."/>
            <person name="Shabalina S.A."/>
            <person name="Pearson T.R."/>
            <person name="Brinkac L."/>
            <person name="Tan P."/>
            <person name="Nandi T."/>
            <person name="Crabtree J."/>
            <person name="Badger J."/>
            <person name="Beckstrom-Sternberg S."/>
            <person name="Saqib M."/>
            <person name="Schutzer S.E."/>
            <person name="Keim P."/>
            <person name="Nierman W.C."/>
        </authorList>
    </citation>
    <scope>NUCLEOTIDE SEQUENCE [LARGE SCALE GENOMIC DNA]</scope>
    <source>
        <strain>1106a</strain>
    </source>
</reference>
<protein>
    <recommendedName>
        <fullName evidence="1">Large ribosomal subunit protein bL27</fullName>
    </recommendedName>
    <alternativeName>
        <fullName evidence="3">50S ribosomal protein L27</fullName>
    </alternativeName>
</protein>
<sequence>MAHKKAGGSSRNGRDSESKRLGVKVYGGQAINAGGIIVRQRGTRMHAGENVGMGKDHTLFALVDGHVKFTTKGAAKKHTVVVVPAAA</sequence>
<dbReference type="EMBL" id="CP000572">
    <property type="protein sequence ID" value="ABN90729.1"/>
    <property type="molecule type" value="Genomic_DNA"/>
</dbReference>
<dbReference type="RefSeq" id="WP_004194025.1">
    <property type="nucleotide sequence ID" value="NC_009076.1"/>
</dbReference>
<dbReference type="SMR" id="A3NZJ1"/>
<dbReference type="GeneID" id="93061604"/>
<dbReference type="KEGG" id="bpl:BURPS1106A_3525"/>
<dbReference type="HOGENOM" id="CLU_095424_4_1_4"/>
<dbReference type="Proteomes" id="UP000006738">
    <property type="component" value="Chromosome I"/>
</dbReference>
<dbReference type="GO" id="GO:0022625">
    <property type="term" value="C:cytosolic large ribosomal subunit"/>
    <property type="evidence" value="ECO:0007669"/>
    <property type="project" value="TreeGrafter"/>
</dbReference>
<dbReference type="GO" id="GO:0003735">
    <property type="term" value="F:structural constituent of ribosome"/>
    <property type="evidence" value="ECO:0007669"/>
    <property type="project" value="InterPro"/>
</dbReference>
<dbReference type="GO" id="GO:0006412">
    <property type="term" value="P:translation"/>
    <property type="evidence" value="ECO:0007669"/>
    <property type="project" value="UniProtKB-UniRule"/>
</dbReference>
<dbReference type="FunFam" id="2.40.50.100:FF:000001">
    <property type="entry name" value="50S ribosomal protein L27"/>
    <property type="match status" value="1"/>
</dbReference>
<dbReference type="Gene3D" id="2.40.50.100">
    <property type="match status" value="1"/>
</dbReference>
<dbReference type="HAMAP" id="MF_00539">
    <property type="entry name" value="Ribosomal_bL27"/>
    <property type="match status" value="1"/>
</dbReference>
<dbReference type="InterPro" id="IPR001684">
    <property type="entry name" value="Ribosomal_bL27"/>
</dbReference>
<dbReference type="InterPro" id="IPR018261">
    <property type="entry name" value="Ribosomal_bL27_CS"/>
</dbReference>
<dbReference type="NCBIfam" id="TIGR00062">
    <property type="entry name" value="L27"/>
    <property type="match status" value="1"/>
</dbReference>
<dbReference type="PANTHER" id="PTHR15893:SF0">
    <property type="entry name" value="LARGE RIBOSOMAL SUBUNIT PROTEIN BL27M"/>
    <property type="match status" value="1"/>
</dbReference>
<dbReference type="PANTHER" id="PTHR15893">
    <property type="entry name" value="RIBOSOMAL PROTEIN L27"/>
    <property type="match status" value="1"/>
</dbReference>
<dbReference type="Pfam" id="PF01016">
    <property type="entry name" value="Ribosomal_L27"/>
    <property type="match status" value="1"/>
</dbReference>
<dbReference type="PRINTS" id="PR00063">
    <property type="entry name" value="RIBOSOMALL27"/>
</dbReference>
<dbReference type="SUPFAM" id="SSF110324">
    <property type="entry name" value="Ribosomal L27 protein-like"/>
    <property type="match status" value="1"/>
</dbReference>
<dbReference type="PROSITE" id="PS00831">
    <property type="entry name" value="RIBOSOMAL_L27"/>
    <property type="match status" value="1"/>
</dbReference>
<evidence type="ECO:0000255" key="1">
    <source>
        <dbReference type="HAMAP-Rule" id="MF_00539"/>
    </source>
</evidence>
<evidence type="ECO:0000256" key="2">
    <source>
        <dbReference type="SAM" id="MobiDB-lite"/>
    </source>
</evidence>
<evidence type="ECO:0000305" key="3"/>
<comment type="similarity">
    <text evidence="1">Belongs to the bacterial ribosomal protein bL27 family.</text>
</comment>